<feature type="chain" id="PRO_0000051130" description="Phospholipase A-2-activating protein">
    <location>
        <begin position="1"/>
        <end position="795"/>
    </location>
</feature>
<feature type="repeat" description="WD 1">
    <location>
        <begin position="17"/>
        <end position="56"/>
    </location>
</feature>
<feature type="repeat" description="WD 2">
    <location>
        <begin position="63"/>
        <end position="107"/>
    </location>
</feature>
<feature type="repeat" description="WD 3">
    <location>
        <begin position="110"/>
        <end position="148"/>
    </location>
</feature>
<feature type="repeat" description="WD 4">
    <location>
        <begin position="149"/>
        <end position="188"/>
    </location>
</feature>
<feature type="repeat" description="WD 5">
    <location>
        <begin position="190"/>
        <end position="227"/>
    </location>
</feature>
<feature type="repeat" description="WD 6">
    <location>
        <begin position="229"/>
        <end position="268"/>
    </location>
</feature>
<feature type="repeat" description="WD 7">
    <location>
        <begin position="270"/>
        <end position="307"/>
    </location>
</feature>
<feature type="domain" description="PFU" evidence="2">
    <location>
        <begin position="366"/>
        <end position="465"/>
    </location>
</feature>
<feature type="domain" description="PUL" evidence="3">
    <location>
        <begin position="533"/>
        <end position="794"/>
    </location>
</feature>
<feature type="repeat" description="ARM 1">
    <location>
        <begin position="546"/>
        <end position="588"/>
    </location>
</feature>
<feature type="repeat" description="ARM 2">
    <location>
        <begin position="589"/>
        <end position="620"/>
    </location>
</feature>
<feature type="repeat" description="ARM 3">
    <location>
        <begin position="621"/>
        <end position="669"/>
    </location>
</feature>
<feature type="repeat" description="ARM 4">
    <location>
        <begin position="670"/>
        <end position="715"/>
    </location>
</feature>
<feature type="repeat" description="ARM 5">
    <location>
        <begin position="716"/>
        <end position="755"/>
    </location>
</feature>
<feature type="repeat" description="ARM 6">
    <location>
        <begin position="756"/>
        <end position="795"/>
    </location>
</feature>
<feature type="modified residue" description="Phosphoserine" evidence="12">
    <location>
        <position position="50"/>
    </location>
</feature>
<feature type="modified residue" description="N6-acetyllysine" evidence="11">
    <location>
        <position position="529"/>
    </location>
</feature>
<feature type="sequence variant" id="VAR_079276" description="In NDMSBA; dbSNP:rs747956857." evidence="9">
    <original>G</original>
    <variation>V</variation>
    <location>
        <position position="23"/>
    </location>
</feature>
<feature type="sequence variant" id="VAR_079277" description="In NDMSBA; no effect on protein stability; no effect on subcellular localization; decreased function in positive regulation of cytosolic phospholipase A2 activity; in patient cells homozygous for the mutation; dbSNP:rs1114167457." evidence="8">
    <original>L</original>
    <variation>F</variation>
    <location>
        <position position="752"/>
    </location>
</feature>
<feature type="sequence conflict" description="In Ref. 5; AAD42075." evidence="10" ref="5">
    <original>L</original>
    <variation>F</variation>
    <location>
        <position position="14"/>
    </location>
</feature>
<feature type="sequence conflict" description="In Ref. 5; AAD42075." evidence="10" ref="5">
    <original>E</original>
    <variation>D</variation>
    <location>
        <position position="57"/>
    </location>
</feature>
<feature type="sequence conflict" description="In Ref. 5; AAD42075." evidence="10" ref="5">
    <original>A</original>
    <variation>F</variation>
    <location>
        <position position="86"/>
    </location>
</feature>
<feature type="sequence conflict" description="In Ref. 5; AAD42075." evidence="10" ref="5">
    <original>F</original>
    <variation>L</variation>
    <location>
        <position position="97"/>
    </location>
</feature>
<feature type="sequence conflict" description="In Ref. 1; BAA91803." evidence="10" ref="1">
    <original>D</original>
    <variation>G</variation>
    <location>
        <position position="172"/>
    </location>
</feature>
<feature type="sequence conflict" description="In Ref. 6; BAD97264." evidence="10" ref="6">
    <original>E</original>
    <variation>K</variation>
    <location>
        <position position="363"/>
    </location>
</feature>
<feature type="sequence conflict" description="In Ref. 5; AAD42075." evidence="10" ref="5">
    <original>T</original>
    <variation>A</variation>
    <location>
        <position position="422"/>
    </location>
</feature>
<feature type="sequence conflict" description="In Ref. 1; BAA92105." evidence="10" ref="1">
    <original>N</original>
    <variation>S</variation>
    <location>
        <position position="520"/>
    </location>
</feature>
<feature type="sequence conflict" description="In Ref. 5; AAD42075." evidence="10" ref="5">
    <original>M</original>
    <variation>L</variation>
    <location>
        <position position="531"/>
    </location>
</feature>
<feature type="sequence conflict" description="In Ref. 5; AAD42075." evidence="10" ref="5">
    <original>V</original>
    <variation>L</variation>
    <location>
        <position position="541"/>
    </location>
</feature>
<feature type="sequence conflict" description="In Ref. 5; AAD42075." evidence="10" ref="5">
    <original>L</original>
    <variation>P</variation>
    <location>
        <position position="746"/>
    </location>
</feature>
<feature type="strand" evidence="13">
    <location>
        <begin position="390"/>
        <end position="392"/>
    </location>
</feature>
<feature type="strand" evidence="13">
    <location>
        <begin position="394"/>
        <end position="396"/>
    </location>
</feature>
<feature type="strand" evidence="13">
    <location>
        <begin position="399"/>
        <end position="407"/>
    </location>
</feature>
<feature type="strand" evidence="13">
    <location>
        <begin position="410"/>
        <end position="412"/>
    </location>
</feature>
<feature type="strand" evidence="13">
    <location>
        <begin position="416"/>
        <end position="420"/>
    </location>
</feature>
<feature type="helix" evidence="13">
    <location>
        <begin position="426"/>
        <end position="437"/>
    </location>
</feature>
<feature type="helix" evidence="13">
    <location>
        <begin position="443"/>
        <end position="455"/>
    </location>
</feature>
<feature type="turn" evidence="13">
    <location>
        <begin position="457"/>
        <end position="460"/>
    </location>
</feature>
<feature type="helix" evidence="14">
    <location>
        <begin position="548"/>
        <end position="559"/>
    </location>
</feature>
<feature type="helix" evidence="14">
    <location>
        <begin position="564"/>
        <end position="566"/>
    </location>
</feature>
<feature type="helix" evidence="14">
    <location>
        <begin position="571"/>
        <end position="584"/>
    </location>
</feature>
<feature type="helix" evidence="14">
    <location>
        <begin position="593"/>
        <end position="603"/>
    </location>
</feature>
<feature type="turn" evidence="14">
    <location>
        <begin position="607"/>
        <end position="609"/>
    </location>
</feature>
<feature type="helix" evidence="14">
    <location>
        <begin position="611"/>
        <end position="620"/>
    </location>
</feature>
<feature type="helix" evidence="14">
    <location>
        <begin position="624"/>
        <end position="631"/>
    </location>
</feature>
<feature type="turn" evidence="14">
    <location>
        <begin position="633"/>
        <end position="635"/>
    </location>
</feature>
<feature type="helix" evidence="14">
    <location>
        <begin position="636"/>
        <end position="645"/>
    </location>
</feature>
<feature type="helix" evidence="14">
    <location>
        <begin position="653"/>
        <end position="665"/>
    </location>
</feature>
<feature type="helix" evidence="14">
    <location>
        <begin position="666"/>
        <end position="668"/>
    </location>
</feature>
<feature type="helix" evidence="14">
    <location>
        <begin position="670"/>
        <end position="678"/>
    </location>
</feature>
<feature type="helix" evidence="14">
    <location>
        <begin position="680"/>
        <end position="688"/>
    </location>
</feature>
<feature type="helix" evidence="14">
    <location>
        <begin position="689"/>
        <end position="691"/>
    </location>
</feature>
<feature type="helix" evidence="14">
    <location>
        <begin position="696"/>
        <end position="715"/>
    </location>
</feature>
<feature type="helix" evidence="14">
    <location>
        <begin position="719"/>
        <end position="733"/>
    </location>
</feature>
<feature type="helix" evidence="14">
    <location>
        <begin position="739"/>
        <end position="753"/>
    </location>
</feature>
<feature type="helix" evidence="14">
    <location>
        <begin position="757"/>
        <end position="765"/>
    </location>
</feature>
<feature type="helix" evidence="14">
    <location>
        <begin position="768"/>
        <end position="771"/>
    </location>
</feature>
<feature type="helix" evidence="14">
    <location>
        <begin position="772"/>
        <end position="777"/>
    </location>
</feature>
<feature type="helix" evidence="14">
    <location>
        <begin position="782"/>
        <end position="792"/>
    </location>
</feature>
<evidence type="ECO:0000250" key="1">
    <source>
        <dbReference type="UniProtKB" id="P27612"/>
    </source>
</evidence>
<evidence type="ECO:0000255" key="2">
    <source>
        <dbReference type="PROSITE-ProRule" id="PRU00727"/>
    </source>
</evidence>
<evidence type="ECO:0000255" key="3">
    <source>
        <dbReference type="PROSITE-ProRule" id="PRU00729"/>
    </source>
</evidence>
<evidence type="ECO:0000269" key="4">
    <source>
    </source>
</evidence>
<evidence type="ECO:0000269" key="5">
    <source>
    </source>
</evidence>
<evidence type="ECO:0000269" key="6">
    <source>
    </source>
</evidence>
<evidence type="ECO:0000269" key="7">
    <source>
    </source>
</evidence>
<evidence type="ECO:0000269" key="8">
    <source>
    </source>
</evidence>
<evidence type="ECO:0000269" key="9">
    <source>
    </source>
</evidence>
<evidence type="ECO:0000305" key="10"/>
<evidence type="ECO:0007744" key="11">
    <source>
    </source>
</evidence>
<evidence type="ECO:0007744" key="12">
    <source>
    </source>
</evidence>
<evidence type="ECO:0007829" key="13">
    <source>
        <dbReference type="PDB" id="2K89"/>
    </source>
</evidence>
<evidence type="ECO:0007829" key="14">
    <source>
        <dbReference type="PDB" id="3EBB"/>
    </source>
</evidence>
<gene>
    <name type="primary">PLAA</name>
    <name type="synonym">PLAP</name>
</gene>
<reference key="1">
    <citation type="journal article" date="2004" name="Nat. Genet.">
        <title>Complete sequencing and characterization of 21,243 full-length human cDNAs.</title>
        <authorList>
            <person name="Ota T."/>
            <person name="Suzuki Y."/>
            <person name="Nishikawa T."/>
            <person name="Otsuki T."/>
            <person name="Sugiyama T."/>
            <person name="Irie R."/>
            <person name="Wakamatsu A."/>
            <person name="Hayashi K."/>
            <person name="Sato H."/>
            <person name="Nagai K."/>
            <person name="Kimura K."/>
            <person name="Makita H."/>
            <person name="Sekine M."/>
            <person name="Obayashi M."/>
            <person name="Nishi T."/>
            <person name="Shibahara T."/>
            <person name="Tanaka T."/>
            <person name="Ishii S."/>
            <person name="Yamamoto J."/>
            <person name="Saito K."/>
            <person name="Kawai Y."/>
            <person name="Isono Y."/>
            <person name="Nakamura Y."/>
            <person name="Nagahari K."/>
            <person name="Murakami K."/>
            <person name="Yasuda T."/>
            <person name="Iwayanagi T."/>
            <person name="Wagatsuma M."/>
            <person name="Shiratori A."/>
            <person name="Sudo H."/>
            <person name="Hosoiri T."/>
            <person name="Kaku Y."/>
            <person name="Kodaira H."/>
            <person name="Kondo H."/>
            <person name="Sugawara M."/>
            <person name="Takahashi M."/>
            <person name="Kanda K."/>
            <person name="Yokoi T."/>
            <person name="Furuya T."/>
            <person name="Kikkawa E."/>
            <person name="Omura Y."/>
            <person name="Abe K."/>
            <person name="Kamihara K."/>
            <person name="Katsuta N."/>
            <person name="Sato K."/>
            <person name="Tanikawa M."/>
            <person name="Yamazaki M."/>
            <person name="Ninomiya K."/>
            <person name="Ishibashi T."/>
            <person name="Yamashita H."/>
            <person name="Murakawa K."/>
            <person name="Fujimori K."/>
            <person name="Tanai H."/>
            <person name="Kimata M."/>
            <person name="Watanabe M."/>
            <person name="Hiraoka S."/>
            <person name="Chiba Y."/>
            <person name="Ishida S."/>
            <person name="Ono Y."/>
            <person name="Takiguchi S."/>
            <person name="Watanabe S."/>
            <person name="Yosida M."/>
            <person name="Hotuta T."/>
            <person name="Kusano J."/>
            <person name="Kanehori K."/>
            <person name="Takahashi-Fujii A."/>
            <person name="Hara H."/>
            <person name="Tanase T.-O."/>
            <person name="Nomura Y."/>
            <person name="Togiya S."/>
            <person name="Komai F."/>
            <person name="Hara R."/>
            <person name="Takeuchi K."/>
            <person name="Arita M."/>
            <person name="Imose N."/>
            <person name="Musashino K."/>
            <person name="Yuuki H."/>
            <person name="Oshima A."/>
            <person name="Sasaki N."/>
            <person name="Aotsuka S."/>
            <person name="Yoshikawa Y."/>
            <person name="Matsunawa H."/>
            <person name="Ichihara T."/>
            <person name="Shiohata N."/>
            <person name="Sano S."/>
            <person name="Moriya S."/>
            <person name="Momiyama H."/>
            <person name="Satoh N."/>
            <person name="Takami S."/>
            <person name="Terashima Y."/>
            <person name="Suzuki O."/>
            <person name="Nakagawa S."/>
            <person name="Senoh A."/>
            <person name="Mizoguchi H."/>
            <person name="Goto Y."/>
            <person name="Shimizu F."/>
            <person name="Wakebe H."/>
            <person name="Hishigaki H."/>
            <person name="Watanabe T."/>
            <person name="Sugiyama A."/>
            <person name="Takemoto M."/>
            <person name="Kawakami B."/>
            <person name="Yamazaki M."/>
            <person name="Watanabe K."/>
            <person name="Kumagai A."/>
            <person name="Itakura S."/>
            <person name="Fukuzumi Y."/>
            <person name="Fujimori Y."/>
            <person name="Komiyama M."/>
            <person name="Tashiro H."/>
            <person name="Tanigami A."/>
            <person name="Fujiwara T."/>
            <person name="Ono T."/>
            <person name="Yamada K."/>
            <person name="Fujii Y."/>
            <person name="Ozaki K."/>
            <person name="Hirao M."/>
            <person name="Ohmori Y."/>
            <person name="Kawabata A."/>
            <person name="Hikiji T."/>
            <person name="Kobatake N."/>
            <person name="Inagaki H."/>
            <person name="Ikema Y."/>
            <person name="Okamoto S."/>
            <person name="Okitani R."/>
            <person name="Kawakami T."/>
            <person name="Noguchi S."/>
            <person name="Itoh T."/>
            <person name="Shigeta K."/>
            <person name="Senba T."/>
            <person name="Matsumura K."/>
            <person name="Nakajima Y."/>
            <person name="Mizuno T."/>
            <person name="Morinaga M."/>
            <person name="Sasaki M."/>
            <person name="Togashi T."/>
            <person name="Oyama M."/>
            <person name="Hata H."/>
            <person name="Watanabe M."/>
            <person name="Komatsu T."/>
            <person name="Mizushima-Sugano J."/>
            <person name="Satoh T."/>
            <person name="Shirai Y."/>
            <person name="Takahashi Y."/>
            <person name="Nakagawa K."/>
            <person name="Okumura K."/>
            <person name="Nagase T."/>
            <person name="Nomura N."/>
            <person name="Kikuchi H."/>
            <person name="Masuho Y."/>
            <person name="Yamashita R."/>
            <person name="Nakai K."/>
            <person name="Yada T."/>
            <person name="Nakamura Y."/>
            <person name="Ohara O."/>
            <person name="Isogai T."/>
            <person name="Sugano S."/>
        </authorList>
    </citation>
    <scope>NUCLEOTIDE SEQUENCE [LARGE SCALE MRNA]</scope>
</reference>
<reference key="2">
    <citation type="journal article" date="2007" name="BMC Genomics">
        <title>The full-ORF clone resource of the German cDNA consortium.</title>
        <authorList>
            <person name="Bechtel S."/>
            <person name="Rosenfelder H."/>
            <person name="Duda A."/>
            <person name="Schmidt C.P."/>
            <person name="Ernst U."/>
            <person name="Wellenreuther R."/>
            <person name="Mehrle A."/>
            <person name="Schuster C."/>
            <person name="Bahr A."/>
            <person name="Bloecker H."/>
            <person name="Heubner D."/>
            <person name="Hoerlein A."/>
            <person name="Michel G."/>
            <person name="Wedler H."/>
            <person name="Koehrer K."/>
            <person name="Ottenwaelder B."/>
            <person name="Poustka A."/>
            <person name="Wiemann S."/>
            <person name="Schupp I."/>
        </authorList>
    </citation>
    <scope>NUCLEOTIDE SEQUENCE [LARGE SCALE MRNA]</scope>
    <source>
        <tissue>Testis</tissue>
    </source>
</reference>
<reference key="3">
    <citation type="journal article" date="2004" name="Nature">
        <title>DNA sequence and analysis of human chromosome 9.</title>
        <authorList>
            <person name="Humphray S.J."/>
            <person name="Oliver K."/>
            <person name="Hunt A.R."/>
            <person name="Plumb R.W."/>
            <person name="Loveland J.E."/>
            <person name="Howe K.L."/>
            <person name="Andrews T.D."/>
            <person name="Searle S."/>
            <person name="Hunt S.E."/>
            <person name="Scott C.E."/>
            <person name="Jones M.C."/>
            <person name="Ainscough R."/>
            <person name="Almeida J.P."/>
            <person name="Ambrose K.D."/>
            <person name="Ashwell R.I.S."/>
            <person name="Babbage A.K."/>
            <person name="Babbage S."/>
            <person name="Bagguley C.L."/>
            <person name="Bailey J."/>
            <person name="Banerjee R."/>
            <person name="Barker D.J."/>
            <person name="Barlow K.F."/>
            <person name="Bates K."/>
            <person name="Beasley H."/>
            <person name="Beasley O."/>
            <person name="Bird C.P."/>
            <person name="Bray-Allen S."/>
            <person name="Brown A.J."/>
            <person name="Brown J.Y."/>
            <person name="Burford D."/>
            <person name="Burrill W."/>
            <person name="Burton J."/>
            <person name="Carder C."/>
            <person name="Carter N.P."/>
            <person name="Chapman J.C."/>
            <person name="Chen Y."/>
            <person name="Clarke G."/>
            <person name="Clark S.Y."/>
            <person name="Clee C.M."/>
            <person name="Clegg S."/>
            <person name="Collier R.E."/>
            <person name="Corby N."/>
            <person name="Crosier M."/>
            <person name="Cummings A.T."/>
            <person name="Davies J."/>
            <person name="Dhami P."/>
            <person name="Dunn M."/>
            <person name="Dutta I."/>
            <person name="Dyer L.W."/>
            <person name="Earthrowl M.E."/>
            <person name="Faulkner L."/>
            <person name="Fleming C.J."/>
            <person name="Frankish A."/>
            <person name="Frankland J.A."/>
            <person name="French L."/>
            <person name="Fricker D.G."/>
            <person name="Garner P."/>
            <person name="Garnett J."/>
            <person name="Ghori J."/>
            <person name="Gilbert J.G.R."/>
            <person name="Glison C."/>
            <person name="Grafham D.V."/>
            <person name="Gribble S."/>
            <person name="Griffiths C."/>
            <person name="Griffiths-Jones S."/>
            <person name="Grocock R."/>
            <person name="Guy J."/>
            <person name="Hall R.E."/>
            <person name="Hammond S."/>
            <person name="Harley J.L."/>
            <person name="Harrison E.S.I."/>
            <person name="Hart E.A."/>
            <person name="Heath P.D."/>
            <person name="Henderson C.D."/>
            <person name="Hopkins B.L."/>
            <person name="Howard P.J."/>
            <person name="Howden P.J."/>
            <person name="Huckle E."/>
            <person name="Johnson C."/>
            <person name="Johnson D."/>
            <person name="Joy A.A."/>
            <person name="Kay M."/>
            <person name="Keenan S."/>
            <person name="Kershaw J.K."/>
            <person name="Kimberley A.M."/>
            <person name="King A."/>
            <person name="Knights A."/>
            <person name="Laird G.K."/>
            <person name="Langford C."/>
            <person name="Lawlor S."/>
            <person name="Leongamornlert D.A."/>
            <person name="Leversha M."/>
            <person name="Lloyd C."/>
            <person name="Lloyd D.M."/>
            <person name="Lovell J."/>
            <person name="Martin S."/>
            <person name="Mashreghi-Mohammadi M."/>
            <person name="Matthews L."/>
            <person name="McLaren S."/>
            <person name="McLay K.E."/>
            <person name="McMurray A."/>
            <person name="Milne S."/>
            <person name="Nickerson T."/>
            <person name="Nisbett J."/>
            <person name="Nordsiek G."/>
            <person name="Pearce A.V."/>
            <person name="Peck A.I."/>
            <person name="Porter K.M."/>
            <person name="Pandian R."/>
            <person name="Pelan S."/>
            <person name="Phillimore B."/>
            <person name="Povey S."/>
            <person name="Ramsey Y."/>
            <person name="Rand V."/>
            <person name="Scharfe M."/>
            <person name="Sehra H.K."/>
            <person name="Shownkeen R."/>
            <person name="Sims S.K."/>
            <person name="Skuce C.D."/>
            <person name="Smith M."/>
            <person name="Steward C.A."/>
            <person name="Swarbreck D."/>
            <person name="Sycamore N."/>
            <person name="Tester J."/>
            <person name="Thorpe A."/>
            <person name="Tracey A."/>
            <person name="Tromans A."/>
            <person name="Thomas D.W."/>
            <person name="Wall M."/>
            <person name="Wallis J.M."/>
            <person name="West A.P."/>
            <person name="Whitehead S.L."/>
            <person name="Willey D.L."/>
            <person name="Williams S.A."/>
            <person name="Wilming L."/>
            <person name="Wray P.W."/>
            <person name="Young L."/>
            <person name="Ashurst J.L."/>
            <person name="Coulson A."/>
            <person name="Blocker H."/>
            <person name="Durbin R.M."/>
            <person name="Sulston J.E."/>
            <person name="Hubbard T."/>
            <person name="Jackson M.J."/>
            <person name="Bentley D.R."/>
            <person name="Beck S."/>
            <person name="Rogers J."/>
            <person name="Dunham I."/>
        </authorList>
    </citation>
    <scope>NUCLEOTIDE SEQUENCE [LARGE SCALE GENOMIC DNA]</scope>
</reference>
<reference key="4">
    <citation type="journal article" date="2004" name="Genome Res.">
        <title>The status, quality, and expansion of the NIH full-length cDNA project: the Mammalian Gene Collection (MGC).</title>
        <authorList>
            <consortium name="The MGC Project Team"/>
        </authorList>
    </citation>
    <scope>NUCLEOTIDE SEQUENCE [LARGE SCALE MRNA]</scope>
    <source>
        <tissue>Uterus</tissue>
    </source>
</reference>
<reference key="5">
    <citation type="journal article" date="1999" name="Genomics">
        <title>Chromosomal localization of phospholipase A2 activating protein, an ets2 target gene, to 9p21.</title>
        <authorList>
            <person name="Beatty B."/>
            <person name="Qi S."/>
            <person name="Pienkowska M."/>
            <person name="Scherer S.W."/>
            <person name="Testa J.R."/>
            <person name="Cheng J.Q."/>
            <person name="Herbrick J.-A."/>
            <person name="Scheidl T."/>
            <person name="Zhang Z."/>
            <person name="Kola I."/>
            <person name="Seth A."/>
        </authorList>
    </citation>
    <scope>NUCLEOTIDE SEQUENCE [MRNA] OF 3-795</scope>
</reference>
<reference key="6">
    <citation type="submission" date="2005-04" db="EMBL/GenBank/DDBJ databases">
        <authorList>
            <person name="Totoki Y."/>
            <person name="Toyoda A."/>
            <person name="Takeda T."/>
            <person name="Sakaki Y."/>
            <person name="Tanaka A."/>
            <person name="Yokoyama S."/>
        </authorList>
    </citation>
    <scope>NUCLEOTIDE SEQUENCE [LARGE SCALE MRNA] OF 48-795</scope>
    <source>
        <tissue>Kidney</tissue>
    </source>
</reference>
<reference key="7">
    <citation type="journal article" date="1999" name="Gene">
        <title>Cloning of the human phospholipase A2 activating protein (hPLAP) gene on the chromosome 9p21 melanoma deleted region.</title>
        <authorList>
            <person name="Ruiz A."/>
            <person name="Nadal M."/>
            <person name="Puig S."/>
            <person name="Estivill X."/>
        </authorList>
    </citation>
    <scope>NUCLEOTIDE SEQUENCE [MRNA] OF 49-795</scope>
    <source>
        <tissue>Fetal brain</tissue>
    </source>
</reference>
<reference key="8">
    <citation type="journal article" date="1999" name="Biochim. Biophys. Acta">
        <title>Molecular characterization of cDNA for phospholipase A2-activating protein.</title>
        <authorList>
            <person name="Chopra A.K."/>
            <person name="Ribardo D.A."/>
            <person name="Wood T.G."/>
            <person name="Prusak D.J."/>
            <person name="Xu X.-J."/>
            <person name="Peterson J.W."/>
        </authorList>
    </citation>
    <scope>NUCLEOTIDE SEQUENCE [MRNA] OF 58-795</scope>
</reference>
<reference key="9">
    <citation type="journal article" date="2008" name="Cell. Signal.">
        <title>Alteration in the activation state of new inflammation-associated targets by phospholipase A2-activating protein (PLAA).</title>
        <authorList>
            <person name="Zhang F."/>
            <person name="Sha J."/>
            <person name="Wood T.G."/>
            <person name="Galindo C.L."/>
            <person name="Garner H.R."/>
            <person name="Burkart M.F."/>
            <person name="Suarez G."/>
            <person name="Sierra J.C."/>
            <person name="Agar S.L."/>
            <person name="Peterson J.W."/>
            <person name="Chopra A.K."/>
        </authorList>
    </citation>
    <scope>FUNCTION</scope>
    <scope>INDUCTION</scope>
</reference>
<reference key="10">
    <citation type="journal article" date="2009" name="Science">
        <title>Lysine acetylation targets protein complexes and co-regulates major cellular functions.</title>
        <authorList>
            <person name="Choudhary C."/>
            <person name="Kumar C."/>
            <person name="Gnad F."/>
            <person name="Nielsen M.L."/>
            <person name="Rehman M."/>
            <person name="Walther T.C."/>
            <person name="Olsen J.V."/>
            <person name="Mann M."/>
        </authorList>
    </citation>
    <scope>ACETYLATION [LARGE SCALE ANALYSIS] AT LYS-529</scope>
    <scope>IDENTIFICATION BY MASS SPECTROMETRY [LARGE SCALE ANALYSIS]</scope>
</reference>
<reference key="11">
    <citation type="journal article" date="2011" name="BMC Syst. Biol.">
        <title>Initial characterization of the human central proteome.</title>
        <authorList>
            <person name="Burkard T.R."/>
            <person name="Planyavsky M."/>
            <person name="Kaupe I."/>
            <person name="Breitwieser F.P."/>
            <person name="Buerckstuemmer T."/>
            <person name="Bennett K.L."/>
            <person name="Superti-Furga G."/>
            <person name="Colinge J."/>
        </authorList>
    </citation>
    <scope>IDENTIFICATION BY MASS SPECTROMETRY [LARGE SCALE ANALYSIS]</scope>
</reference>
<reference key="12">
    <citation type="journal article" date="2013" name="J. Proteome Res.">
        <title>Toward a comprehensive characterization of a human cancer cell phosphoproteome.</title>
        <authorList>
            <person name="Zhou H."/>
            <person name="Di Palma S."/>
            <person name="Preisinger C."/>
            <person name="Peng M."/>
            <person name="Polat A.N."/>
            <person name="Heck A.J."/>
            <person name="Mohammed S."/>
        </authorList>
    </citation>
    <scope>PHOSPHORYLATION [LARGE SCALE ANALYSIS] AT SER-50</scope>
    <scope>IDENTIFICATION BY MASS SPECTROMETRY [LARGE SCALE ANALYSIS]</scope>
    <source>
        <tissue>Cervix carcinoma</tissue>
        <tissue>Erythroleukemia</tissue>
    </source>
</reference>
<reference key="13">
    <citation type="journal article" date="2017" name="EMBO J.">
        <title>VCP/p97 cooperates with YOD1, UBXD1 and PLAA to drive clearance of ruptured lysosomes by autophagy.</title>
        <authorList>
            <person name="Papadopoulos C."/>
            <person name="Kirchner P."/>
            <person name="Bug M."/>
            <person name="Grum D."/>
            <person name="Koerver L."/>
            <person name="Schulze N."/>
            <person name="Poehler R."/>
            <person name="Dressler A."/>
            <person name="Fengler S."/>
            <person name="Arhzaouy K."/>
            <person name="Lux V."/>
            <person name="Ehrmann M."/>
            <person name="Weihl C.C."/>
            <person name="Meyer H."/>
        </authorList>
    </citation>
    <scope>FUNCTION</scope>
    <scope>INTERACTION WITH UBXN6; VCP AND YOD1</scope>
    <scope>SUBCELLULAR LOCATION</scope>
</reference>
<reference key="14">
    <citation type="journal article" date="2009" name="J. Biol. Chem.">
        <title>Structural basis for ubiquitin recognition by a novel domain from human phospholipase A2-activating protein.</title>
        <authorList>
            <person name="Fu Q.-S."/>
            <person name="Zhou C.-J."/>
            <person name="Gao H.-C."/>
            <person name="Jiang Y.-J."/>
            <person name="Zhou Z.-R."/>
            <person name="Hong J."/>
            <person name="Yao W.-M."/>
            <person name="Song A.-X."/>
            <person name="Lin D.-H."/>
            <person name="Hu H.-Y."/>
        </authorList>
    </citation>
    <scope>STRUCTURE BY NMR OF 386-465</scope>
    <scope>INTERACTION WITH UBIQUITIN</scope>
</reference>
<reference key="15">
    <citation type="journal article" date="2010" name="J. Biol. Chem.">
        <title>Structure and function of the PLAA/Ufd3-p97/Cdc48 complex.</title>
        <authorList>
            <person name="Qiu L."/>
            <person name="Pashkova N."/>
            <person name="Walker J.R."/>
            <person name="Winistorfer S."/>
            <person name="Allali-Hassani A."/>
            <person name="Akutsu M."/>
            <person name="Piper R."/>
            <person name="Dhe-Paganon S."/>
        </authorList>
    </citation>
    <scope>X-RAY CRYSTALLOGRAPHY (1.9 ANGSTROMS) OF 511-795 IN COMPLEX WITH VCP</scope>
    <scope>DOMAIN ARM REPEATS</scope>
</reference>
<reference key="16">
    <citation type="journal article" date="2017" name="Am. J. Hum. Genet.">
        <title>PLAA mutations cause a lethal infantile epileptic encephalopathy by disrupting ubiquitin-mediated endolysosomal degradation of synaptic proteins.</title>
        <authorList>
            <person name="Hall E.A."/>
            <person name="Nahorski M.S."/>
            <person name="Murray L.M."/>
            <person name="Shaheen R."/>
            <person name="Perkins E."/>
            <person name="Dissanayake K.N."/>
            <person name="Kristaryanto Y."/>
            <person name="Jones R.A."/>
            <person name="Vogt J."/>
            <person name="Rivagorda M."/>
            <person name="Handley M.T."/>
            <person name="Mali G.R."/>
            <person name="Quidwai T."/>
            <person name="Soares D.C."/>
            <person name="Keighren M.A."/>
            <person name="McKie L."/>
            <person name="Mort R.L."/>
            <person name="Gammoh N."/>
            <person name="Garcia-Munoz A."/>
            <person name="Davey T."/>
            <person name="Vermeren M."/>
            <person name="Walsh D."/>
            <person name="Budd P."/>
            <person name="Aligianis I.A."/>
            <person name="Faqeih E."/>
            <person name="Quigley A.J."/>
            <person name="Jackson I.J."/>
            <person name="Kulathu Y."/>
            <person name="Jackson M."/>
            <person name="Ribchester R.R."/>
            <person name="von Kriegsheim A."/>
            <person name="Alkuraya F.S."/>
            <person name="Woods C.G."/>
            <person name="Maher E.R."/>
            <person name="Mill P."/>
        </authorList>
    </citation>
    <scope>VARIANT NDMSBA VAL-23</scope>
    <scope>CHARACTERIZATION OF VARIANT NDMSBA VAL-23</scope>
    <scope>INVOLVEMENT IN NDMSBA</scope>
</reference>
<reference key="17">
    <citation type="journal article" date="2017" name="Brain">
        <title>Phospholipase A2-activating protein is associated with a novel form of leukoencephalopathy.</title>
        <authorList>
            <person name="Falik Zaccai T.C."/>
            <person name="Savitzki D."/>
            <person name="Zivony-Elboum Y."/>
            <person name="Vilboux T."/>
            <person name="Fitts E.C."/>
            <person name="Shoval Y."/>
            <person name="Kalfon L."/>
            <person name="Samra N."/>
            <person name="Keren Z."/>
            <person name="Gross B."/>
            <person name="Chasnyk N."/>
            <person name="Straussberg R."/>
            <person name="Mullikin J.C."/>
            <person name="Teer J.K."/>
            <person name="Geiger D."/>
            <person name="Kornitzer D."/>
            <person name="Bitterman-Deutsch O."/>
            <person name="Samson A.O."/>
            <person name="Wakamiya M."/>
            <person name="Peterson J.W."/>
            <person name="Kirtley M.L."/>
            <person name="Pinchuk I.V."/>
            <person name="Baze W.B."/>
            <person name="Gahl W.A."/>
            <person name="Kleta R."/>
            <person name="Anikster Y."/>
            <person name="Chopra A.K."/>
        </authorList>
    </citation>
    <scope>VARIANT NDMSBA PHE-752</scope>
    <scope>CHARACTERIZATION OF VARIANT NDMSBA PHE-752</scope>
    <scope>FUNCTION</scope>
    <scope>SUBCELLULAR LOCATION</scope>
</reference>
<comment type="function">
    <text evidence="1 4 7 8">Plays a role in protein ubiquitination, sorting and degradation through its association with VCP (PubMed:27753622). Involved in ubiquitin-mediated membrane proteins trafficking to late endosomes in an ESCRT-dependent manner, and hence plays a role in synaptic vesicle recycling (By similarity). May play a role in macroautophagy, regulating for instance the clearance of damaged lysosomes (PubMed:27753622). Plays a role in cerebellar Purkinje cell development (By similarity). Positively regulates cytosolic and calcium-independent phospholipase A2 activities in a tumor necrosis factor alpha (TNF-alpha)- or lipopolysaccharide (LPS)-dependent manner, and hence prostaglandin E2 biosynthesis (PubMed:18291623, PubMed:28007986).</text>
</comment>
<comment type="subunit">
    <text evidence="5 6 7">Interacts with ubiquitin (PubMed:19423704). Interacts with UBXN6, VCP and YOD1; may form a complex involved in macroautophagy (PubMed:19887378, PubMed:27753622).</text>
</comment>
<comment type="interaction">
    <interactant intactId="EBI-1994037">
        <id>Q9Y263</id>
    </interactant>
    <interactant intactId="EBI-742054">
        <id>Q96D03</id>
        <label>DDIT4L</label>
    </interactant>
    <organismsDiffer>false</organismsDiffer>
    <experiments>3</experiments>
</comment>
<comment type="interaction">
    <interactant intactId="EBI-1994037">
        <id>Q9Y263</id>
    </interactant>
    <interactant intactId="EBI-396343">
        <id>O00629</id>
        <label>KPNA4</label>
    </interactant>
    <organismsDiffer>false</organismsDiffer>
    <experiments>3</experiments>
</comment>
<comment type="interaction">
    <interactant intactId="EBI-1994037">
        <id>Q9Y263</id>
    </interactant>
    <interactant intactId="EBI-1058647">
        <id>Q04323</id>
        <label>UBXN1</label>
    </interactant>
    <organismsDiffer>false</organismsDiffer>
    <experiments>5</experiments>
</comment>
<comment type="interaction">
    <interactant intactId="EBI-1994037">
        <id>Q9Y263</id>
    </interactant>
    <interactant intactId="EBI-11530712">
        <id>Q04323-2</id>
        <label>UBXN1</label>
    </interactant>
    <organismsDiffer>false</organismsDiffer>
    <experiments>3</experiments>
</comment>
<comment type="interaction">
    <interactant intactId="EBI-1994037">
        <id>Q9Y263</id>
    </interactant>
    <interactant intactId="EBI-355164">
        <id>P55072</id>
        <label>VCP</label>
    </interactant>
    <organismsDiffer>false</organismsDiffer>
    <experiments>7</experiments>
</comment>
<comment type="interaction">
    <interactant intactId="EBI-1994037">
        <id>Q9Y263</id>
    </interactant>
    <interactant intactId="EBI-6248077">
        <id>Q76353</id>
    </interactant>
    <organismsDiffer>true</organismsDiffer>
    <experiments>3</experiments>
</comment>
<comment type="subcellular location">
    <subcellularLocation>
        <location evidence="8">Nucleus</location>
    </subcellularLocation>
    <subcellularLocation>
        <location evidence="7 8">Cytoplasm</location>
    </subcellularLocation>
    <subcellularLocation>
        <location evidence="1">Synapse</location>
    </subcellularLocation>
    <text evidence="7">Recruited to damaged lysosomes decorated with K48-linked ubiquitin chains.</text>
</comment>
<comment type="induction">
    <text evidence="4">Up-regulated by tumor necrosis factor alpha (TNF-alpha) (at protein level) (PubMed:18291623).</text>
</comment>
<comment type="domain">
    <text evidence="6">The PUL domain is composed of 6 armadillo-like repeats and mediates the interaction with VCP C-terminus.</text>
</comment>
<comment type="domain">
    <text evidence="6">The PFU domain mediates interaction with ubiquitin.</text>
</comment>
<comment type="disease" evidence="8 9">
    <disease id="DI-05021">
        <name>Neurodevelopmental disorder with progressive microcephaly, spasticity, and brain anomalies</name>
        <acronym>NDMSBA</acronym>
        <description>An autosomal recessive neurodevelopmental disorder characterized by progressive microcephaly, spastic quadriparesis, global developmental delay, profound intellectual disability and severely impaired or absent motor function. More variable features include seizures and optic atrophy.</description>
        <dbReference type="MIM" id="617527"/>
    </disease>
    <text>The disease is caused by variants affecting the gene represented in this entry.</text>
</comment>
<comment type="similarity">
    <text evidence="10">Belongs to the WD repeat PLAP family.</text>
</comment>
<comment type="sequence caution" evidence="10">
    <conflict type="erroneous initiation">
        <sequence resource="EMBL-CDS" id="AAD03030"/>
    </conflict>
    <text>Truncated N-terminus.</text>
</comment>
<comment type="sequence caution" evidence="10">
    <conflict type="erroneous initiation">
        <sequence resource="EMBL-CDS" id="AAD42075"/>
    </conflict>
    <text>Truncated N-terminus.</text>
</comment>
<comment type="sequence caution" evidence="10">
    <conflict type="frameshift">
        <sequence resource="EMBL-CDS" id="AAD42075"/>
    </conflict>
</comment>
<comment type="sequence caution" evidence="10">
    <conflict type="erroneous termination">
        <sequence resource="EMBL-CDS" id="BAA92105"/>
    </conflict>
    <text>Truncated C-terminus.</text>
</comment>
<comment type="sequence caution" evidence="10">
    <conflict type="erroneous initiation">
        <sequence resource="EMBL-CDS" id="BAD97264"/>
    </conflict>
    <text>Truncated N-terminus.</text>
</comment>
<comment type="sequence caution" evidence="10">
    <conflict type="erroneous initiation">
        <sequence resource="EMBL-CDS" id="CAB42881"/>
    </conflict>
    <text>Truncated N-terminus.</text>
</comment>
<organism>
    <name type="scientific">Homo sapiens</name>
    <name type="common">Human</name>
    <dbReference type="NCBI Taxonomy" id="9606"/>
    <lineage>
        <taxon>Eukaryota</taxon>
        <taxon>Metazoa</taxon>
        <taxon>Chordata</taxon>
        <taxon>Craniata</taxon>
        <taxon>Vertebrata</taxon>
        <taxon>Euteleostomi</taxon>
        <taxon>Mammalia</taxon>
        <taxon>Eutheria</taxon>
        <taxon>Euarchontoglires</taxon>
        <taxon>Primates</taxon>
        <taxon>Haplorrhini</taxon>
        <taxon>Catarrhini</taxon>
        <taxon>Hominidae</taxon>
        <taxon>Homo</taxon>
    </lineage>
</organism>
<keyword id="KW-0002">3D-structure</keyword>
<keyword id="KW-0007">Acetylation</keyword>
<keyword id="KW-0963">Cytoplasm</keyword>
<keyword id="KW-0217">Developmental protein</keyword>
<keyword id="KW-0225">Disease variant</keyword>
<keyword id="KW-0991">Intellectual disability</keyword>
<keyword id="KW-0524">Neurogenesis</keyword>
<keyword id="KW-0539">Nucleus</keyword>
<keyword id="KW-0597">Phosphoprotein</keyword>
<keyword id="KW-1267">Proteomics identification</keyword>
<keyword id="KW-1185">Reference proteome</keyword>
<keyword id="KW-0677">Repeat</keyword>
<keyword id="KW-0770">Synapse</keyword>
<keyword id="KW-0853">WD repeat</keyword>
<sequence>MTSGATRYRLSCSLRGHELDVRGLVCCAYPPGAFVSVSRDRTTRLWAPDSPNRSFTEMHCMSGHSNFVSCVCIIPSSDIYPHGLIATGGNDHNICIFSLDSPMPLYILKGHKNTVCSLSSGKFGTLLSGSWDTTAKVWLNDKCMMTLQGHTAAVWAVKILPEQGLMLTGSADKTVKLWKAGRCERTFSGHEDCVRGLAILSETEFLSCANDASIRRWQITGECLEVYYGHTNYIYSISVFPNCRDFVTTAEDRSLRIWKHGECAQTIRLPAQSIWCCCVLDNGDIVVGASDGIIRVFTESEDRTASAEEIKAFEKELSHATIDSKTGDLGDINAEQLPGREHLNEPGTREGQTRLIRDGEKVEAYQWSVSEGRWIKIGDVVGSSGANQQTSGKVLYEGKEFDYVFSIDVNEGGPSYKLPYNTSDDPWLTAYNFLQKNDLNPMFLDQVAKFIIDNTKGQMLGLGNPSFSDPFTGGGRYVPGSSGSSNTLPTADPFTGAGRYVPGSASMGTTMAGVDPFTGNSAYRSAASKTMNIYFPKKEAVTFDQANPTQILGKLKELNGTAPEEKKLTEDDLILLEKILSLICNSSSEKPTVQQLQILWKAINCPEDIVFPALDILRLSIKHPSVNENFCNEKEGAQFSSHLINLLNPKGKPANQLLALRTFCNCFVGQAGQKLMMSQRESLMSHAIELKSGSNKNIHIALATLALNYSVCFHKDHNIEGKAQCLSLISTILEVVQDLEATFRLLVALGTLISDDSNAVQLAKSLGVDSQIKKYSSVSEPAKVSECCRFILNLL</sequence>
<accession>Q9Y263</accession>
<accession>Q53EU5</accession>
<accession>Q5VY33</accession>
<accession>Q9NUL8</accession>
<accession>Q9NVE9</accession>
<accession>Q9UF53</accession>
<accession>Q9Y5L1</accession>
<proteinExistence type="evidence at protein level"/>
<dbReference type="EMBL" id="AK001642">
    <property type="protein sequence ID" value="BAA91803.1"/>
    <property type="molecule type" value="mRNA"/>
</dbReference>
<dbReference type="EMBL" id="AK002143">
    <property type="protein sequence ID" value="BAA92105.1"/>
    <property type="status" value="ALT_SEQ"/>
    <property type="molecule type" value="mRNA"/>
</dbReference>
<dbReference type="EMBL" id="AL133608">
    <property type="protein sequence ID" value="CAB63739.1"/>
    <property type="molecule type" value="mRNA"/>
</dbReference>
<dbReference type="EMBL" id="AL356133">
    <property type="status" value="NOT_ANNOTATED_CDS"/>
    <property type="molecule type" value="Genomic_DNA"/>
</dbReference>
<dbReference type="EMBL" id="BC032551">
    <property type="protein sequence ID" value="AAH32551.1"/>
    <property type="molecule type" value="mRNA"/>
</dbReference>
<dbReference type="EMBL" id="AF145020">
    <property type="protein sequence ID" value="AAD42075.1"/>
    <property type="status" value="ALT_SEQ"/>
    <property type="molecule type" value="mRNA"/>
</dbReference>
<dbReference type="EMBL" id="AK223544">
    <property type="protein sequence ID" value="BAD97264.1"/>
    <property type="status" value="ALT_INIT"/>
    <property type="molecule type" value="mRNA"/>
</dbReference>
<dbReference type="EMBL" id="AJ238243">
    <property type="protein sequence ID" value="CAB42881.1"/>
    <property type="status" value="ALT_INIT"/>
    <property type="molecule type" value="mRNA"/>
</dbReference>
<dbReference type="EMBL" id="AF083395">
    <property type="protein sequence ID" value="AAD03030.1"/>
    <property type="status" value="ALT_INIT"/>
    <property type="molecule type" value="mRNA"/>
</dbReference>
<dbReference type="CCDS" id="CCDS35000.1"/>
<dbReference type="PIR" id="T43447">
    <property type="entry name" value="T43447"/>
</dbReference>
<dbReference type="RefSeq" id="NP_001026859.1">
    <property type="nucleotide sequence ID" value="NM_001031689.3"/>
</dbReference>
<dbReference type="PDB" id="2K89">
    <property type="method" value="NMR"/>
    <property type="chains" value="A=386-465"/>
</dbReference>
<dbReference type="PDB" id="2K8A">
    <property type="method" value="NMR"/>
    <property type="chains" value="A=386-465"/>
</dbReference>
<dbReference type="PDB" id="2K8B">
    <property type="method" value="NMR"/>
    <property type="chains" value="B=386-465"/>
</dbReference>
<dbReference type="PDB" id="2K8C">
    <property type="method" value="NMR"/>
    <property type="chains" value="B=386-465"/>
</dbReference>
<dbReference type="PDB" id="3EBB">
    <property type="method" value="X-ray"/>
    <property type="resolution" value="1.90 A"/>
    <property type="chains" value="A/B/C/D=511-795"/>
</dbReference>
<dbReference type="PDBsum" id="2K89"/>
<dbReference type="PDBsum" id="2K8A"/>
<dbReference type="PDBsum" id="2K8B"/>
<dbReference type="PDBsum" id="2K8C"/>
<dbReference type="PDBsum" id="3EBB"/>
<dbReference type="BMRB" id="Q9Y263"/>
<dbReference type="SMR" id="Q9Y263"/>
<dbReference type="BioGRID" id="114774">
    <property type="interactions" value="102"/>
</dbReference>
<dbReference type="ComplexPortal" id="CPX-8129">
    <property type="entry name" value="VCP-PLAA AAA ATPase complex"/>
</dbReference>
<dbReference type="FunCoup" id="Q9Y263">
    <property type="interactions" value="4384"/>
</dbReference>
<dbReference type="IntAct" id="Q9Y263">
    <property type="interactions" value="60"/>
</dbReference>
<dbReference type="MINT" id="Q9Y263"/>
<dbReference type="STRING" id="9606.ENSP00000380460"/>
<dbReference type="BindingDB" id="Q9Y263"/>
<dbReference type="ChEMBL" id="CHEMBL6114"/>
<dbReference type="GlyGen" id="Q9Y263">
    <property type="glycosylation" value="2 sites, 1 O-linked glycan (2 sites)"/>
</dbReference>
<dbReference type="iPTMnet" id="Q9Y263"/>
<dbReference type="MetOSite" id="Q9Y263"/>
<dbReference type="PhosphoSitePlus" id="Q9Y263"/>
<dbReference type="SwissPalm" id="Q9Y263"/>
<dbReference type="BioMuta" id="PLAA"/>
<dbReference type="DMDM" id="108935868"/>
<dbReference type="jPOST" id="Q9Y263"/>
<dbReference type="MassIVE" id="Q9Y263"/>
<dbReference type="PaxDb" id="9606-ENSP00000380460"/>
<dbReference type="PeptideAtlas" id="Q9Y263"/>
<dbReference type="ProteomicsDB" id="85667"/>
<dbReference type="Pumba" id="Q9Y263"/>
<dbReference type="Antibodypedia" id="3560">
    <property type="antibodies" value="446 antibodies from 28 providers"/>
</dbReference>
<dbReference type="DNASU" id="9373"/>
<dbReference type="Ensembl" id="ENST00000397292.8">
    <property type="protein sequence ID" value="ENSP00000380460.3"/>
    <property type="gene ID" value="ENSG00000137055.15"/>
</dbReference>
<dbReference type="GeneID" id="9373"/>
<dbReference type="KEGG" id="hsa:9373"/>
<dbReference type="MANE-Select" id="ENST00000397292.8">
    <property type="protein sequence ID" value="ENSP00000380460.3"/>
    <property type="RefSeq nucleotide sequence ID" value="NM_001031689.3"/>
    <property type="RefSeq protein sequence ID" value="NP_001026859.1"/>
</dbReference>
<dbReference type="UCSC" id="uc003zqd.4">
    <property type="organism name" value="human"/>
</dbReference>
<dbReference type="AGR" id="HGNC:9043"/>
<dbReference type="CTD" id="9373"/>
<dbReference type="DisGeNET" id="9373"/>
<dbReference type="GeneCards" id="PLAA"/>
<dbReference type="HGNC" id="HGNC:9043">
    <property type="gene designation" value="PLAA"/>
</dbReference>
<dbReference type="HPA" id="ENSG00000137055">
    <property type="expression patterns" value="Low tissue specificity"/>
</dbReference>
<dbReference type="MalaCards" id="PLAA"/>
<dbReference type="MIM" id="603873">
    <property type="type" value="gene"/>
</dbReference>
<dbReference type="MIM" id="617527">
    <property type="type" value="phenotype"/>
</dbReference>
<dbReference type="neXtProt" id="NX_Q9Y263"/>
<dbReference type="OpenTargets" id="ENSG00000137055"/>
<dbReference type="Orphanet" id="521426">
    <property type="disease" value="PLAA-associated neurodevelopmental disorder"/>
</dbReference>
<dbReference type="PharmGKB" id="PA33370"/>
<dbReference type="VEuPathDB" id="HostDB:ENSG00000137055"/>
<dbReference type="eggNOG" id="KOG0301">
    <property type="taxonomic scope" value="Eukaryota"/>
</dbReference>
<dbReference type="GeneTree" id="ENSGT00550000074944"/>
<dbReference type="HOGENOM" id="CLU_011791_2_0_1"/>
<dbReference type="InParanoid" id="Q9Y263"/>
<dbReference type="OMA" id="DKCIYYW"/>
<dbReference type="OrthoDB" id="10265988at2759"/>
<dbReference type="PAN-GO" id="Q9Y263">
    <property type="GO annotations" value="5 GO annotations based on evolutionary models"/>
</dbReference>
<dbReference type="PhylomeDB" id="Q9Y263"/>
<dbReference type="TreeFam" id="TF105944"/>
<dbReference type="PathwayCommons" id="Q9Y263"/>
<dbReference type="SignaLink" id="Q9Y263"/>
<dbReference type="BioGRID-ORCS" id="9373">
    <property type="hits" value="25 hits in 1154 CRISPR screens"/>
</dbReference>
<dbReference type="ChiTaRS" id="PLAA">
    <property type="organism name" value="human"/>
</dbReference>
<dbReference type="EvolutionaryTrace" id="Q9Y263"/>
<dbReference type="GeneWiki" id="PLAA_(gene)"/>
<dbReference type="GenomeRNAi" id="9373"/>
<dbReference type="Pharos" id="Q9Y263">
    <property type="development level" value="Tchem"/>
</dbReference>
<dbReference type="PRO" id="PR:Q9Y263"/>
<dbReference type="Proteomes" id="UP000005640">
    <property type="component" value="Chromosome 9"/>
</dbReference>
<dbReference type="RNAct" id="Q9Y263">
    <property type="molecule type" value="protein"/>
</dbReference>
<dbReference type="Bgee" id="ENSG00000137055">
    <property type="expression patterns" value="Expressed in gastrocnemius and 184 other cell types or tissues"/>
</dbReference>
<dbReference type="ExpressionAtlas" id="Q9Y263">
    <property type="expression patterns" value="baseline and differential"/>
</dbReference>
<dbReference type="GO" id="GO:0005737">
    <property type="term" value="C:cytoplasm"/>
    <property type="evidence" value="ECO:0000314"/>
    <property type="project" value="UniProtKB"/>
</dbReference>
<dbReference type="GO" id="GO:0070062">
    <property type="term" value="C:extracellular exosome"/>
    <property type="evidence" value="ECO:0000314"/>
    <property type="project" value="UniProtKB"/>
</dbReference>
<dbReference type="GO" id="GO:0005634">
    <property type="term" value="C:nucleus"/>
    <property type="evidence" value="ECO:0000314"/>
    <property type="project" value="UniProtKB"/>
</dbReference>
<dbReference type="GO" id="GO:0045202">
    <property type="term" value="C:synapse"/>
    <property type="evidence" value="ECO:0000250"/>
    <property type="project" value="UniProtKB"/>
</dbReference>
<dbReference type="GO" id="GO:0016005">
    <property type="term" value="F:phospholipase A2 activator activity"/>
    <property type="evidence" value="ECO:0000315"/>
    <property type="project" value="UniProtKB"/>
</dbReference>
<dbReference type="GO" id="GO:0043130">
    <property type="term" value="F:ubiquitin binding"/>
    <property type="evidence" value="ECO:0000318"/>
    <property type="project" value="GO_Central"/>
</dbReference>
<dbReference type="GO" id="GO:0071222">
    <property type="term" value="P:cellular response to lipopolysaccharide"/>
    <property type="evidence" value="ECO:0000315"/>
    <property type="project" value="UniProtKB"/>
</dbReference>
<dbReference type="GO" id="GO:0006954">
    <property type="term" value="P:inflammatory response"/>
    <property type="evidence" value="ECO:0007669"/>
    <property type="project" value="Ensembl"/>
</dbReference>
<dbReference type="GO" id="GO:0016236">
    <property type="term" value="P:macroautophagy"/>
    <property type="evidence" value="ECO:0000315"/>
    <property type="project" value="UniProtKB"/>
</dbReference>
<dbReference type="GO" id="GO:1900045">
    <property type="term" value="P:negative regulation of protein K63-linked ubiquitination"/>
    <property type="evidence" value="ECO:0000250"/>
    <property type="project" value="UniProtKB"/>
</dbReference>
<dbReference type="GO" id="GO:0007399">
    <property type="term" value="P:nervous system development"/>
    <property type="evidence" value="ECO:0007669"/>
    <property type="project" value="UniProtKB-KW"/>
</dbReference>
<dbReference type="GO" id="GO:0006644">
    <property type="term" value="P:phospholipid metabolic process"/>
    <property type="evidence" value="ECO:0000304"/>
    <property type="project" value="ProtInc"/>
</dbReference>
<dbReference type="GO" id="GO:1903861">
    <property type="term" value="P:positive regulation of dendrite extension"/>
    <property type="evidence" value="ECO:0000250"/>
    <property type="project" value="UniProtKB"/>
</dbReference>
<dbReference type="GO" id="GO:2001224">
    <property type="term" value="P:positive regulation of neuron migration"/>
    <property type="evidence" value="ECO:0000250"/>
    <property type="project" value="UniProtKB"/>
</dbReference>
<dbReference type="GO" id="GO:0031394">
    <property type="term" value="P:positive regulation of prostaglandin biosynthetic process"/>
    <property type="evidence" value="ECO:0000250"/>
    <property type="project" value="UniProtKB"/>
</dbReference>
<dbReference type="GO" id="GO:1903423">
    <property type="term" value="P:positive regulation of synaptic vesicle recycling"/>
    <property type="evidence" value="ECO:0000250"/>
    <property type="project" value="UniProtKB"/>
</dbReference>
<dbReference type="GO" id="GO:0043161">
    <property type="term" value="P:proteasome-mediated ubiquitin-dependent protein catabolic process"/>
    <property type="evidence" value="ECO:0000318"/>
    <property type="project" value="GO_Central"/>
</dbReference>
<dbReference type="GO" id="GO:0007165">
    <property type="term" value="P:signal transduction"/>
    <property type="evidence" value="ECO:0000304"/>
    <property type="project" value="ProtInc"/>
</dbReference>
<dbReference type="GO" id="GO:0010992">
    <property type="term" value="P:ubiquitin recycling"/>
    <property type="evidence" value="ECO:0000318"/>
    <property type="project" value="GO_Central"/>
</dbReference>
<dbReference type="GO" id="GO:0043162">
    <property type="term" value="P:ubiquitin-dependent protein catabolic process via the multivesicular body sorting pathway"/>
    <property type="evidence" value="ECO:0000250"/>
    <property type="project" value="UniProtKB"/>
</dbReference>
<dbReference type="CDD" id="cd00200">
    <property type="entry name" value="WD40"/>
    <property type="match status" value="1"/>
</dbReference>
<dbReference type="FunFam" id="2.130.10.10:FF:000175">
    <property type="entry name" value="Phospholipase A-2-activating protein"/>
    <property type="match status" value="1"/>
</dbReference>
<dbReference type="FunFam" id="1.25.10.10:FF:000163">
    <property type="entry name" value="Phospholipase A-2-activating protein, putative"/>
    <property type="match status" value="1"/>
</dbReference>
<dbReference type="FunFam" id="3.10.20.870:FF:000001">
    <property type="entry name" value="Phospholipase A-2-activating protein-like"/>
    <property type="match status" value="1"/>
</dbReference>
<dbReference type="Gene3D" id="1.25.10.10">
    <property type="entry name" value="Leucine-rich Repeat Variant"/>
    <property type="match status" value="1"/>
</dbReference>
<dbReference type="Gene3D" id="3.10.20.870">
    <property type="entry name" value="PFU (PLAA family ubiquitin binding), C-terminal domain"/>
    <property type="match status" value="1"/>
</dbReference>
<dbReference type="Gene3D" id="2.130.10.10">
    <property type="entry name" value="YVTN repeat-like/Quinoprotein amine dehydrogenase"/>
    <property type="match status" value="1"/>
</dbReference>
<dbReference type="IDEAL" id="IID00228"/>
<dbReference type="InterPro" id="IPR011989">
    <property type="entry name" value="ARM-like"/>
</dbReference>
<dbReference type="InterPro" id="IPR016024">
    <property type="entry name" value="ARM-type_fold"/>
</dbReference>
<dbReference type="InterPro" id="IPR015155">
    <property type="entry name" value="PFU"/>
</dbReference>
<dbReference type="InterPro" id="IPR038122">
    <property type="entry name" value="PFU_sf"/>
</dbReference>
<dbReference type="InterPro" id="IPR013535">
    <property type="entry name" value="PUL_dom"/>
</dbReference>
<dbReference type="InterPro" id="IPR015943">
    <property type="entry name" value="WD40/YVTN_repeat-like_dom_sf"/>
</dbReference>
<dbReference type="InterPro" id="IPR036322">
    <property type="entry name" value="WD40_repeat_dom_sf"/>
</dbReference>
<dbReference type="InterPro" id="IPR001680">
    <property type="entry name" value="WD40_rpt"/>
</dbReference>
<dbReference type="PANTHER" id="PTHR19849">
    <property type="entry name" value="PHOSPHOLIPASE A-2-ACTIVATING PROTEIN"/>
    <property type="match status" value="1"/>
</dbReference>
<dbReference type="PANTHER" id="PTHR19849:SF0">
    <property type="entry name" value="PHOSPHOLIPASE A-2-ACTIVATING PROTEIN"/>
    <property type="match status" value="1"/>
</dbReference>
<dbReference type="Pfam" id="PF09070">
    <property type="entry name" value="PFU"/>
    <property type="match status" value="1"/>
</dbReference>
<dbReference type="Pfam" id="PF08324">
    <property type="entry name" value="PUL"/>
    <property type="match status" value="1"/>
</dbReference>
<dbReference type="Pfam" id="PF00400">
    <property type="entry name" value="WD40"/>
    <property type="match status" value="6"/>
</dbReference>
<dbReference type="SMART" id="SM00320">
    <property type="entry name" value="WD40"/>
    <property type="match status" value="7"/>
</dbReference>
<dbReference type="SUPFAM" id="SSF48371">
    <property type="entry name" value="ARM repeat"/>
    <property type="match status" value="1"/>
</dbReference>
<dbReference type="SUPFAM" id="SSF50978">
    <property type="entry name" value="WD40 repeat-like"/>
    <property type="match status" value="1"/>
</dbReference>
<dbReference type="PROSITE" id="PS51394">
    <property type="entry name" value="PFU"/>
    <property type="match status" value="1"/>
</dbReference>
<dbReference type="PROSITE" id="PS51396">
    <property type="entry name" value="PUL"/>
    <property type="match status" value="1"/>
</dbReference>
<dbReference type="PROSITE" id="PS50082">
    <property type="entry name" value="WD_REPEATS_2"/>
    <property type="match status" value="3"/>
</dbReference>
<dbReference type="PROSITE" id="PS50294">
    <property type="entry name" value="WD_REPEATS_REGION"/>
    <property type="match status" value="1"/>
</dbReference>
<protein>
    <recommendedName>
        <fullName>Phospholipase A-2-activating protein</fullName>
        <shortName>PLA2P</shortName>
        <shortName>PLAP</shortName>
    </recommendedName>
</protein>
<name>PLAP_HUMAN</name>